<feature type="chain" id="PRO_1000101331" description="Glycine--tRNA ligase beta subunit">
    <location>
        <begin position="1"/>
        <end position="689"/>
    </location>
</feature>
<accession>B5EX65</accession>
<protein>
    <recommendedName>
        <fullName evidence="1">Glycine--tRNA ligase beta subunit</fullName>
        <ecNumber evidence="1">6.1.1.14</ecNumber>
    </recommendedName>
    <alternativeName>
        <fullName evidence="1">Glycyl-tRNA synthetase beta subunit</fullName>
        <shortName evidence="1">GlyRS</shortName>
    </alternativeName>
</protein>
<proteinExistence type="inferred from homology"/>
<keyword id="KW-0030">Aminoacyl-tRNA synthetase</keyword>
<keyword id="KW-0067">ATP-binding</keyword>
<keyword id="KW-0963">Cytoplasm</keyword>
<keyword id="KW-0436">Ligase</keyword>
<keyword id="KW-0547">Nucleotide-binding</keyword>
<keyword id="KW-0648">Protein biosynthesis</keyword>
<organism>
    <name type="scientific">Salmonella agona (strain SL483)</name>
    <dbReference type="NCBI Taxonomy" id="454166"/>
    <lineage>
        <taxon>Bacteria</taxon>
        <taxon>Pseudomonadati</taxon>
        <taxon>Pseudomonadota</taxon>
        <taxon>Gammaproteobacteria</taxon>
        <taxon>Enterobacterales</taxon>
        <taxon>Enterobacteriaceae</taxon>
        <taxon>Salmonella</taxon>
    </lineage>
</organism>
<name>SYGB_SALA4</name>
<sequence>MSEKTFLVEIGTEELPPKALRSLAESFAANFTAELDNAGLAHGNVEWFAAPRRLALKVANLAESQPDREVEKRGPAIAQAFDAEGKPSKAAEGWARGCGITVDQAERLKTDKGEWLLYRAHVKGESTEALVPNMVATSLAKLPIPKLMRWGASDVHFVRPVHTVTLLLGDKVIPAIILGIQSDRVIRGHRFMGEPEFTIDNADQYPQILLERGKVIADYEARKAKIKADAEEAARKIGGNADLSESLLEEVASLVEWPVVLTAKFEEKFLAVPAEALVYTMKGDQKYFPVYDNAGKLLPNFIFVANIESKDPTQIISGNEKVVRPRLADAEFFFNTDRKKRLEDHLPRLQTVLFQQQLGTLRDKTDRIQALAGWIAGQIGADVNHATRAGLLSKCDLMTNMVFEFTDTQGVMGMHYARHDGEAEDVAVALNEQYQPRFAGDDLPSNPVACALAIADKMDTLAGIFGIGQHPKGDKDPFALRRAALGVLRIIVEKNLNLDLQTLTEEAARLYGDKLTNANVVDDVIDFMLGRFRAWYQDEGYTVDTIQAVLARRPTRPADFDARMKAVSHFRTLEEASALAAANKRVSNILAKATEPLNDIVHASVLKEAAEIELARHLVVLRDKLQPYFADGRYQEALIELAALRAPVDEFFENVMVNAEEKDIRINRLTLLSKLRELFLQVADISLLQ</sequence>
<gene>
    <name evidence="1" type="primary">glyS</name>
    <name type="ordered locus">SeAg_B3868</name>
</gene>
<comment type="catalytic activity">
    <reaction evidence="1">
        <text>tRNA(Gly) + glycine + ATP = glycyl-tRNA(Gly) + AMP + diphosphate</text>
        <dbReference type="Rhea" id="RHEA:16013"/>
        <dbReference type="Rhea" id="RHEA-COMP:9664"/>
        <dbReference type="Rhea" id="RHEA-COMP:9683"/>
        <dbReference type="ChEBI" id="CHEBI:30616"/>
        <dbReference type="ChEBI" id="CHEBI:33019"/>
        <dbReference type="ChEBI" id="CHEBI:57305"/>
        <dbReference type="ChEBI" id="CHEBI:78442"/>
        <dbReference type="ChEBI" id="CHEBI:78522"/>
        <dbReference type="ChEBI" id="CHEBI:456215"/>
        <dbReference type="EC" id="6.1.1.14"/>
    </reaction>
</comment>
<comment type="subunit">
    <text evidence="1">Tetramer of two alpha and two beta subunits.</text>
</comment>
<comment type="subcellular location">
    <subcellularLocation>
        <location evidence="1">Cytoplasm</location>
    </subcellularLocation>
</comment>
<comment type="similarity">
    <text evidence="1">Belongs to the class-II aminoacyl-tRNA synthetase family.</text>
</comment>
<reference key="1">
    <citation type="journal article" date="2011" name="J. Bacteriol.">
        <title>Comparative genomics of 28 Salmonella enterica isolates: evidence for CRISPR-mediated adaptive sublineage evolution.</title>
        <authorList>
            <person name="Fricke W.F."/>
            <person name="Mammel M.K."/>
            <person name="McDermott P.F."/>
            <person name="Tartera C."/>
            <person name="White D.G."/>
            <person name="Leclerc J.E."/>
            <person name="Ravel J."/>
            <person name="Cebula T.A."/>
        </authorList>
    </citation>
    <scope>NUCLEOTIDE SEQUENCE [LARGE SCALE GENOMIC DNA]</scope>
    <source>
        <strain>SL483</strain>
    </source>
</reference>
<evidence type="ECO:0000255" key="1">
    <source>
        <dbReference type="HAMAP-Rule" id="MF_00255"/>
    </source>
</evidence>
<dbReference type="EC" id="6.1.1.14" evidence="1"/>
<dbReference type="EMBL" id="CP001138">
    <property type="protein sequence ID" value="ACH52442.1"/>
    <property type="molecule type" value="Genomic_DNA"/>
</dbReference>
<dbReference type="RefSeq" id="WP_001291732.1">
    <property type="nucleotide sequence ID" value="NC_011149.1"/>
</dbReference>
<dbReference type="SMR" id="B5EX65"/>
<dbReference type="KEGG" id="sea:SeAg_B3868"/>
<dbReference type="HOGENOM" id="CLU_007220_2_2_6"/>
<dbReference type="Proteomes" id="UP000008819">
    <property type="component" value="Chromosome"/>
</dbReference>
<dbReference type="GO" id="GO:0005829">
    <property type="term" value="C:cytosol"/>
    <property type="evidence" value="ECO:0007669"/>
    <property type="project" value="TreeGrafter"/>
</dbReference>
<dbReference type="GO" id="GO:0004814">
    <property type="term" value="F:arginine-tRNA ligase activity"/>
    <property type="evidence" value="ECO:0007669"/>
    <property type="project" value="InterPro"/>
</dbReference>
<dbReference type="GO" id="GO:0005524">
    <property type="term" value="F:ATP binding"/>
    <property type="evidence" value="ECO:0007669"/>
    <property type="project" value="UniProtKB-UniRule"/>
</dbReference>
<dbReference type="GO" id="GO:0004820">
    <property type="term" value="F:glycine-tRNA ligase activity"/>
    <property type="evidence" value="ECO:0007669"/>
    <property type="project" value="UniProtKB-UniRule"/>
</dbReference>
<dbReference type="GO" id="GO:0006420">
    <property type="term" value="P:arginyl-tRNA aminoacylation"/>
    <property type="evidence" value="ECO:0007669"/>
    <property type="project" value="InterPro"/>
</dbReference>
<dbReference type="GO" id="GO:0006426">
    <property type="term" value="P:glycyl-tRNA aminoacylation"/>
    <property type="evidence" value="ECO:0007669"/>
    <property type="project" value="UniProtKB-UniRule"/>
</dbReference>
<dbReference type="HAMAP" id="MF_00255">
    <property type="entry name" value="Gly_tRNA_synth_beta"/>
    <property type="match status" value="1"/>
</dbReference>
<dbReference type="InterPro" id="IPR008909">
    <property type="entry name" value="DALR_anticod-bd"/>
</dbReference>
<dbReference type="InterPro" id="IPR015944">
    <property type="entry name" value="Gly-tRNA-synth_bsu"/>
</dbReference>
<dbReference type="InterPro" id="IPR006194">
    <property type="entry name" value="Gly-tRNA-synth_heterodimer"/>
</dbReference>
<dbReference type="NCBIfam" id="TIGR00211">
    <property type="entry name" value="glyS"/>
    <property type="match status" value="1"/>
</dbReference>
<dbReference type="PANTHER" id="PTHR30075:SF2">
    <property type="entry name" value="GLYCINE--TRNA LIGASE, CHLOROPLASTIC_MITOCHONDRIAL 2"/>
    <property type="match status" value="1"/>
</dbReference>
<dbReference type="PANTHER" id="PTHR30075">
    <property type="entry name" value="GLYCYL-TRNA SYNTHETASE"/>
    <property type="match status" value="1"/>
</dbReference>
<dbReference type="Pfam" id="PF05746">
    <property type="entry name" value="DALR_1"/>
    <property type="match status" value="1"/>
</dbReference>
<dbReference type="Pfam" id="PF02092">
    <property type="entry name" value="tRNA_synt_2f"/>
    <property type="match status" value="1"/>
</dbReference>
<dbReference type="PRINTS" id="PR01045">
    <property type="entry name" value="TRNASYNTHGB"/>
</dbReference>
<dbReference type="SUPFAM" id="SSF109604">
    <property type="entry name" value="HD-domain/PDEase-like"/>
    <property type="match status" value="1"/>
</dbReference>
<dbReference type="PROSITE" id="PS50861">
    <property type="entry name" value="AA_TRNA_LIGASE_II_GLYAB"/>
    <property type="match status" value="1"/>
</dbReference>